<name>YANE_ASPNA</name>
<reference key="1">
    <citation type="journal article" date="2011" name="Genome Res.">
        <title>Comparative genomics of citric-acid-producing Aspergillus niger ATCC 1015 versus enzyme-producing CBS 513.88.</title>
        <authorList>
            <person name="Andersen M.R."/>
            <person name="Salazar M.P."/>
            <person name="Schaap P.J."/>
            <person name="van de Vondervoort P.J.I."/>
            <person name="Culley D."/>
            <person name="Thykaer J."/>
            <person name="Frisvad J.C."/>
            <person name="Nielsen K.F."/>
            <person name="Albang R."/>
            <person name="Albermann K."/>
            <person name="Berka R.M."/>
            <person name="Braus G.H."/>
            <person name="Braus-Stromeyer S.A."/>
            <person name="Corrochano L.M."/>
            <person name="Dai Z."/>
            <person name="van Dijck P.W.M."/>
            <person name="Hofmann G."/>
            <person name="Lasure L.L."/>
            <person name="Magnuson J.K."/>
            <person name="Menke H."/>
            <person name="Meijer M."/>
            <person name="Meijer S.L."/>
            <person name="Nielsen J.B."/>
            <person name="Nielsen M.L."/>
            <person name="van Ooyen A.J.J."/>
            <person name="Pel H.J."/>
            <person name="Poulsen L."/>
            <person name="Samson R.A."/>
            <person name="Stam H."/>
            <person name="Tsang A."/>
            <person name="van den Brink J.M."/>
            <person name="Atkins A."/>
            <person name="Aerts A."/>
            <person name="Shapiro H."/>
            <person name="Pangilinan J."/>
            <person name="Salamov A."/>
            <person name="Lou Y."/>
            <person name="Lindquist E."/>
            <person name="Lucas S."/>
            <person name="Grimwood J."/>
            <person name="Grigoriev I.V."/>
            <person name="Kubicek C.P."/>
            <person name="Martinez D."/>
            <person name="van Peij N.N.M.E."/>
            <person name="Roubos J.A."/>
            <person name="Nielsen J."/>
            <person name="Baker S.E."/>
        </authorList>
    </citation>
    <scope>NUCLEOTIDE SEQUENCE [LARGE SCALE GENOMIC DNA]</scope>
    <source>
        <strain>ATCC 1015 / CBS 113.46 / FGSC A1144 / LSHB Ac4 / NCTC 3858a / NRRL 328 / USDA 3528.7</strain>
    </source>
</reference>
<reference key="2">
    <citation type="journal article" date="2000" name="J. Org. Chem.">
        <title>Yanuthones: novel metabolites from a marine isolate of Aspergillus niger.</title>
        <authorList>
            <person name="Bugni T.S."/>
            <person name="Abbanat D."/>
            <person name="Bernan V.S."/>
            <person name="Maiese W.M."/>
            <person name="Greenstein M."/>
            <person name="Van Wagoner R.M."/>
            <person name="Ireland C.M."/>
        </authorList>
    </citation>
    <scope>BIOTECHNOLOGY</scope>
</reference>
<reference key="3">
    <citation type="journal article" date="2014" name="Chem. Biol.">
        <title>Molecular and chemical characterization of the biosynthesis of the 6-MSA-derived meroterpenoid yanuthone D in Aspergillus niger.</title>
        <authorList>
            <person name="Holm D.K."/>
            <person name="Petersen L.M."/>
            <person name="Klitgaard A."/>
            <person name="Knudsen P.B."/>
            <person name="Jarczynska Z.D."/>
            <person name="Nielsen K.F."/>
            <person name="Gotfredsen C.H."/>
            <person name="Larsen T.O."/>
            <person name="Mortensen U.H."/>
        </authorList>
    </citation>
    <scope>FUNCTION</scope>
    <scope>DISRUPTION PHENOTYPE</scope>
</reference>
<proteinExistence type="evidence at protein level"/>
<protein>
    <recommendedName>
        <fullName evidence="1">Probable oxidoreductase yanE</fullName>
        <ecNumber evidence="1">1.-.-.-</ecNumber>
    </recommendedName>
    <alternativeName>
        <fullName evidence="4">Yanuthone D biosynthesis cluster protein E</fullName>
    </alternativeName>
</protein>
<sequence length="257" mass="29214">MAPCKPRTFTAGEDPLTKFDGAISVATMPRPADRQFLFHGIMRPSRGIYAKLVATGKKPPTHFHPSQWEFFRVLRGNLTVDINGVPVHRTVDDGEMAVPPYTHHVIYGTPGTEMNEVEFLVSATDEEEGATAMDQEFFENWYGYQEDIFQRGEKIDLIQVLAMFDAGGTYLSPPWWVPFRAWVGLILGIVIGRWIGGLLGYAPFYPEWTTNWDAACDRMEQSWFQRRYADRGAQQRAREKFQVQKGQGTVAKGEKSE</sequence>
<gene>
    <name evidence="4" type="primary">yanE</name>
    <name type="ORF">ASPNIDRAFT_192604</name>
</gene>
<evidence type="ECO:0000250" key="1">
    <source>
        <dbReference type="UniProtKB" id="J5J930"/>
    </source>
</evidence>
<evidence type="ECO:0000269" key="2">
    <source>
    </source>
</evidence>
<evidence type="ECO:0000269" key="3">
    <source>
    </source>
</evidence>
<evidence type="ECO:0000303" key="4">
    <source>
    </source>
</evidence>
<evidence type="ECO:0000305" key="5"/>
<organism>
    <name type="scientific">Aspergillus niger (strain ATCC 1015 / CBS 113.46 / FGSC A1144 / LSHB Ac4 / NCTC 3858a / NRRL 328 / USDA 3528.7)</name>
    <dbReference type="NCBI Taxonomy" id="380704"/>
    <lineage>
        <taxon>Eukaryota</taxon>
        <taxon>Fungi</taxon>
        <taxon>Dikarya</taxon>
        <taxon>Ascomycota</taxon>
        <taxon>Pezizomycotina</taxon>
        <taxon>Eurotiomycetes</taxon>
        <taxon>Eurotiomycetidae</taxon>
        <taxon>Eurotiales</taxon>
        <taxon>Aspergillaceae</taxon>
        <taxon>Aspergillus</taxon>
        <taxon>Aspergillus subgen. Circumdati</taxon>
    </lineage>
</organism>
<feature type="chain" id="PRO_0000436769" description="Probable oxidoreductase yanE">
    <location>
        <begin position="1"/>
        <end position="257"/>
    </location>
</feature>
<keyword id="KW-0560">Oxidoreductase</keyword>
<comment type="function">
    <text evidence="3">Part of the gene cluster that mediates the biosynthesis of yanuthone D, a fungal isoprenoid epoxycyclohexenone that acts as an antibiotic against fungi and bacteria (PubMed:24684908). The first step of the pathway is the synthesis of 6-methylsalicylic acid (6-MSA) by the polyketide synthase yanA (PubMed:24684908). 6-MSA is then converted to m-cresol by the decarboxylase yanB (PubMed:24684908). The cytochrome P450 monooxygenase yanC then catalyzes the oxidation of m-cresol to toluquinol (PubMed:24684908). Epoxidation of toluquinol is then performed by the short chain dehydrogenase yanD, with the help of yanE, and a further prenylation by yanG leads to 7-deacetoxyyanuthone A (PubMed:24684908). The next step is the hydroxylation of C-22 of 7-deacetoxyyanuthone A by the cytochrome P450 monooxygenase yanH to yield 22-deacetylyanuthone A (PubMed:24684908). O-Mevalon transferase yanI then attaches mevalon to the hydroxyl group of 22-deacetylyanuthone A to produce yanuthone E (PubMed:24684908). Finally, the FAD-dependent monooxygenase yanF oxidizes the hydroxyl group at C15 of yanuthone E to form yanuthone D (PubMed:24684908). Furthermore, several branching points in the pathway lead to the production of yanuthones F and G from 7-deacetoxyyanuthone A; yanuthones H and I from 22-deacetylyanuthone A; and yanuthone J from yanuthone E (PubMed:24684908). YanE is also involved in the synthesis of yanuthone X1 which does not have 6-methylsalicylic acid (6-MSA) as precursor (PubMed:24684908).</text>
</comment>
<comment type="pathway">
    <text evidence="3">Secondary metabolite biosynthesis; terpenoid biosynthesis.</text>
</comment>
<comment type="disruption phenotype">
    <text evidence="3">Loses the ability to produce yanuthone D (PubMed:24684908). Also leads to the loss of production of yanuthone X1 which does not have 6-methylsalicylic acid (6-MSA) as a precursor (PubMed:24684908).</text>
</comment>
<comment type="biotechnology">
    <text evidence="2">Yanuthone D is an antibiotic against C.albicans, methicillin-resistant S.aureus (MRSA), and vancomycin-resistant Enterococcus (PubMed:11031048).</text>
</comment>
<comment type="similarity">
    <text evidence="5">Belongs to the oxidoreductase OpS7 family.</text>
</comment>
<comment type="sequence caution" evidence="5">
    <conflict type="erroneous gene model prediction">
        <sequence resource="EMBL-CDS" id="EHA22200"/>
    </conflict>
</comment>
<accession>G3Y423</accession>
<dbReference type="EC" id="1.-.-.-" evidence="1"/>
<dbReference type="EMBL" id="ACJE01000012">
    <property type="protein sequence ID" value="EHA22200.1"/>
    <property type="status" value="ALT_SEQ"/>
    <property type="molecule type" value="Genomic_DNA"/>
</dbReference>
<dbReference type="STRING" id="380704.G3Y423"/>
<dbReference type="VEuPathDB" id="FungiDB:ASPNIDRAFT2_1185488"/>
<dbReference type="HOGENOM" id="CLU_068080_1_0_1"/>
<dbReference type="OrthoDB" id="702at5052"/>
<dbReference type="UniPathway" id="UPA00213"/>
<dbReference type="Proteomes" id="UP000009038">
    <property type="component" value="Unassembled WGS sequence"/>
</dbReference>
<dbReference type="GO" id="GO:0016491">
    <property type="term" value="F:oxidoreductase activity"/>
    <property type="evidence" value="ECO:0007669"/>
    <property type="project" value="UniProtKB-KW"/>
</dbReference>
<dbReference type="GO" id="GO:0016114">
    <property type="term" value="P:terpenoid biosynthetic process"/>
    <property type="evidence" value="ECO:0007669"/>
    <property type="project" value="UniProtKB-UniPathway"/>
</dbReference>
<dbReference type="CDD" id="cd02208">
    <property type="entry name" value="cupin_RmlC-like"/>
    <property type="match status" value="1"/>
</dbReference>
<dbReference type="Gene3D" id="2.60.120.10">
    <property type="entry name" value="Jelly Rolls"/>
    <property type="match status" value="1"/>
</dbReference>
<dbReference type="InterPro" id="IPR014710">
    <property type="entry name" value="RmlC-like_jellyroll"/>
</dbReference>
<dbReference type="InterPro" id="IPR011051">
    <property type="entry name" value="RmlC_Cupin_sf"/>
</dbReference>
<dbReference type="SUPFAM" id="SSF51182">
    <property type="entry name" value="RmlC-like cupins"/>
    <property type="match status" value="1"/>
</dbReference>